<reference key="1">
    <citation type="journal article" date="1996" name="Microbiology">
        <title>A 22 kb DNA sequence in the cspB-glpPFKD region at 75 degrees on the Bacillus subtilis chromosome.</title>
        <authorList>
            <person name="Noback M.A."/>
            <person name="Terpstra P."/>
            <person name="Holsappel S."/>
            <person name="Venema G."/>
            <person name="Bron S."/>
        </authorList>
    </citation>
    <scope>NUCLEOTIDE SEQUENCE [GENOMIC DNA]</scope>
    <source>
        <strain>168</strain>
    </source>
</reference>
<reference key="2">
    <citation type="journal article" date="1997" name="Nature">
        <title>The complete genome sequence of the Gram-positive bacterium Bacillus subtilis.</title>
        <authorList>
            <person name="Kunst F."/>
            <person name="Ogasawara N."/>
            <person name="Moszer I."/>
            <person name="Albertini A.M."/>
            <person name="Alloni G."/>
            <person name="Azevedo V."/>
            <person name="Bertero M.G."/>
            <person name="Bessieres P."/>
            <person name="Bolotin A."/>
            <person name="Borchert S."/>
            <person name="Borriss R."/>
            <person name="Boursier L."/>
            <person name="Brans A."/>
            <person name="Braun M."/>
            <person name="Brignell S.C."/>
            <person name="Bron S."/>
            <person name="Brouillet S."/>
            <person name="Bruschi C.V."/>
            <person name="Caldwell B."/>
            <person name="Capuano V."/>
            <person name="Carter N.M."/>
            <person name="Choi S.-K."/>
            <person name="Codani J.-J."/>
            <person name="Connerton I.F."/>
            <person name="Cummings N.J."/>
            <person name="Daniel R.A."/>
            <person name="Denizot F."/>
            <person name="Devine K.M."/>
            <person name="Duesterhoeft A."/>
            <person name="Ehrlich S.D."/>
            <person name="Emmerson P.T."/>
            <person name="Entian K.-D."/>
            <person name="Errington J."/>
            <person name="Fabret C."/>
            <person name="Ferrari E."/>
            <person name="Foulger D."/>
            <person name="Fritz C."/>
            <person name="Fujita M."/>
            <person name="Fujita Y."/>
            <person name="Fuma S."/>
            <person name="Galizzi A."/>
            <person name="Galleron N."/>
            <person name="Ghim S.-Y."/>
            <person name="Glaser P."/>
            <person name="Goffeau A."/>
            <person name="Golightly E.J."/>
            <person name="Grandi G."/>
            <person name="Guiseppi G."/>
            <person name="Guy B.J."/>
            <person name="Haga K."/>
            <person name="Haiech J."/>
            <person name="Harwood C.R."/>
            <person name="Henaut A."/>
            <person name="Hilbert H."/>
            <person name="Holsappel S."/>
            <person name="Hosono S."/>
            <person name="Hullo M.-F."/>
            <person name="Itaya M."/>
            <person name="Jones L.-M."/>
            <person name="Joris B."/>
            <person name="Karamata D."/>
            <person name="Kasahara Y."/>
            <person name="Klaerr-Blanchard M."/>
            <person name="Klein C."/>
            <person name="Kobayashi Y."/>
            <person name="Koetter P."/>
            <person name="Koningstein G."/>
            <person name="Krogh S."/>
            <person name="Kumano M."/>
            <person name="Kurita K."/>
            <person name="Lapidus A."/>
            <person name="Lardinois S."/>
            <person name="Lauber J."/>
            <person name="Lazarevic V."/>
            <person name="Lee S.-M."/>
            <person name="Levine A."/>
            <person name="Liu H."/>
            <person name="Masuda S."/>
            <person name="Mauel C."/>
            <person name="Medigue C."/>
            <person name="Medina N."/>
            <person name="Mellado R.P."/>
            <person name="Mizuno M."/>
            <person name="Moestl D."/>
            <person name="Nakai S."/>
            <person name="Noback M."/>
            <person name="Noone D."/>
            <person name="O'Reilly M."/>
            <person name="Ogawa K."/>
            <person name="Ogiwara A."/>
            <person name="Oudega B."/>
            <person name="Park S.-H."/>
            <person name="Parro V."/>
            <person name="Pohl T.M."/>
            <person name="Portetelle D."/>
            <person name="Porwollik S."/>
            <person name="Prescott A.M."/>
            <person name="Presecan E."/>
            <person name="Pujic P."/>
            <person name="Purnelle B."/>
            <person name="Rapoport G."/>
            <person name="Rey M."/>
            <person name="Reynolds S."/>
            <person name="Rieger M."/>
            <person name="Rivolta C."/>
            <person name="Rocha E."/>
            <person name="Roche B."/>
            <person name="Rose M."/>
            <person name="Sadaie Y."/>
            <person name="Sato T."/>
            <person name="Scanlan E."/>
            <person name="Schleich S."/>
            <person name="Schroeter R."/>
            <person name="Scoffone F."/>
            <person name="Sekiguchi J."/>
            <person name="Sekowska A."/>
            <person name="Seror S.J."/>
            <person name="Serror P."/>
            <person name="Shin B.-S."/>
            <person name="Soldo B."/>
            <person name="Sorokin A."/>
            <person name="Tacconi E."/>
            <person name="Takagi T."/>
            <person name="Takahashi H."/>
            <person name="Takemaru K."/>
            <person name="Takeuchi M."/>
            <person name="Tamakoshi A."/>
            <person name="Tanaka T."/>
            <person name="Terpstra P."/>
            <person name="Tognoni A."/>
            <person name="Tosato V."/>
            <person name="Uchiyama S."/>
            <person name="Vandenbol M."/>
            <person name="Vannier F."/>
            <person name="Vassarotti A."/>
            <person name="Viari A."/>
            <person name="Wambutt R."/>
            <person name="Wedler E."/>
            <person name="Wedler H."/>
            <person name="Weitzenegger T."/>
            <person name="Winters P."/>
            <person name="Wipat A."/>
            <person name="Yamamoto H."/>
            <person name="Yamane K."/>
            <person name="Yasumoto K."/>
            <person name="Yata K."/>
            <person name="Yoshida K."/>
            <person name="Yoshikawa H.-F."/>
            <person name="Zumstein E."/>
            <person name="Yoshikawa H."/>
            <person name="Danchin A."/>
        </authorList>
    </citation>
    <scope>NUCLEOTIDE SEQUENCE [LARGE SCALE GENOMIC DNA]</scope>
    <source>
        <strain>168</strain>
    </source>
</reference>
<sequence length="140" mass="14916">MSSVKDTMTTQVATVSPNQTIQEAASLMKQHNVGAIPVVEQGVLKGMLTDRDIALRTTAQGRDGQTPVSEVMSTELVSGNPNMSLEDASQLMAQHQIRRLPIVDQNNLVGIVALGDLAVNQMSNESAGSALTNISHQNIH</sequence>
<keyword id="KW-0129">CBS domain</keyword>
<keyword id="KW-1185">Reference proteome</keyword>
<keyword id="KW-0677">Repeat</keyword>
<proteinExistence type="predicted"/>
<accession>P54606</accession>
<protein>
    <recommendedName>
        <fullName>CBS domain-containing protein YhcV</fullName>
    </recommendedName>
</protein>
<evidence type="ECO:0000255" key="1">
    <source>
        <dbReference type="PROSITE-ProRule" id="PRU00703"/>
    </source>
</evidence>
<dbReference type="EMBL" id="X96983">
    <property type="protein sequence ID" value="CAA65706.1"/>
    <property type="molecule type" value="Genomic_DNA"/>
</dbReference>
<dbReference type="EMBL" id="AL009126">
    <property type="protein sequence ID" value="CAB12751.1"/>
    <property type="molecule type" value="Genomic_DNA"/>
</dbReference>
<dbReference type="PIR" id="B69824">
    <property type="entry name" value="B69824"/>
</dbReference>
<dbReference type="RefSeq" id="NP_388804.1">
    <property type="nucleotide sequence ID" value="NC_000964.3"/>
</dbReference>
<dbReference type="RefSeq" id="WP_003245462.1">
    <property type="nucleotide sequence ID" value="NZ_OZ025638.1"/>
</dbReference>
<dbReference type="SMR" id="P54606"/>
<dbReference type="FunCoup" id="P54606">
    <property type="interactions" value="321"/>
</dbReference>
<dbReference type="STRING" id="224308.BSU09230"/>
<dbReference type="PaxDb" id="224308-BSU09230"/>
<dbReference type="DNASU" id="939740"/>
<dbReference type="EnsemblBacteria" id="CAB12751">
    <property type="protein sequence ID" value="CAB12751"/>
    <property type="gene ID" value="BSU_09230"/>
</dbReference>
<dbReference type="GeneID" id="939740"/>
<dbReference type="KEGG" id="bsu:BSU09230"/>
<dbReference type="PATRIC" id="fig|224308.179.peg.995"/>
<dbReference type="eggNOG" id="COG0517">
    <property type="taxonomic scope" value="Bacteria"/>
</dbReference>
<dbReference type="InParanoid" id="P54606"/>
<dbReference type="OrthoDB" id="9802114at2"/>
<dbReference type="PhylomeDB" id="P54606"/>
<dbReference type="BioCyc" id="BSUB:BSU09230-MONOMER"/>
<dbReference type="Proteomes" id="UP000001570">
    <property type="component" value="Chromosome"/>
</dbReference>
<dbReference type="CDD" id="cd04622">
    <property type="entry name" value="CBS_pair_HRP1_like"/>
    <property type="match status" value="1"/>
</dbReference>
<dbReference type="Gene3D" id="3.10.580.10">
    <property type="entry name" value="CBS-domain"/>
    <property type="match status" value="1"/>
</dbReference>
<dbReference type="InterPro" id="IPR000644">
    <property type="entry name" value="CBS_dom"/>
</dbReference>
<dbReference type="InterPro" id="IPR046342">
    <property type="entry name" value="CBS_dom_sf"/>
</dbReference>
<dbReference type="InterPro" id="IPR051257">
    <property type="entry name" value="Diverse_CBS-Domain"/>
</dbReference>
<dbReference type="PANTHER" id="PTHR43080:SF2">
    <property type="entry name" value="CBS DOMAIN-CONTAINING PROTEIN"/>
    <property type="match status" value="1"/>
</dbReference>
<dbReference type="PANTHER" id="PTHR43080">
    <property type="entry name" value="CBS DOMAIN-CONTAINING PROTEIN CBSX3, MITOCHONDRIAL"/>
    <property type="match status" value="1"/>
</dbReference>
<dbReference type="Pfam" id="PF00571">
    <property type="entry name" value="CBS"/>
    <property type="match status" value="2"/>
</dbReference>
<dbReference type="SMART" id="SM00116">
    <property type="entry name" value="CBS"/>
    <property type="match status" value="2"/>
</dbReference>
<dbReference type="SUPFAM" id="SSF54631">
    <property type="entry name" value="CBS-domain pair"/>
    <property type="match status" value="1"/>
</dbReference>
<dbReference type="PROSITE" id="PS51371">
    <property type="entry name" value="CBS"/>
    <property type="match status" value="2"/>
</dbReference>
<gene>
    <name type="primary">yhcV</name>
    <name type="ordered locus">BSU09230</name>
</gene>
<feature type="chain" id="PRO_0000049568" description="CBS domain-containing protein YhcV">
    <location>
        <begin position="1"/>
        <end position="140"/>
    </location>
</feature>
<feature type="domain" description="CBS 1" evidence="1">
    <location>
        <begin position="8"/>
        <end position="64"/>
    </location>
</feature>
<feature type="domain" description="CBS 2" evidence="1">
    <location>
        <begin position="72"/>
        <end position="127"/>
    </location>
</feature>
<organism>
    <name type="scientific">Bacillus subtilis (strain 168)</name>
    <dbReference type="NCBI Taxonomy" id="224308"/>
    <lineage>
        <taxon>Bacteria</taxon>
        <taxon>Bacillati</taxon>
        <taxon>Bacillota</taxon>
        <taxon>Bacilli</taxon>
        <taxon>Bacillales</taxon>
        <taxon>Bacillaceae</taxon>
        <taxon>Bacillus</taxon>
    </lineage>
</organism>
<name>YHCV_BACSU</name>